<accession>P57549</accession>
<keyword id="KW-0067">ATP-binding</keyword>
<keyword id="KW-0963">Cytoplasm</keyword>
<keyword id="KW-0378">Hydrolase</keyword>
<keyword id="KW-0547">Nucleotide-binding</keyword>
<keyword id="KW-0645">Protease</keyword>
<keyword id="KW-1185">Reference proteome</keyword>
<keyword id="KW-0720">Serine protease</keyword>
<keyword id="KW-0346">Stress response</keyword>
<proteinExistence type="inferred from homology"/>
<reference key="1">
    <citation type="journal article" date="2000" name="Nature">
        <title>Genome sequence of the endocellular bacterial symbiont of aphids Buchnera sp. APS.</title>
        <authorList>
            <person name="Shigenobu S."/>
            <person name="Watanabe H."/>
            <person name="Hattori M."/>
            <person name="Sakaki Y."/>
            <person name="Ishikawa H."/>
        </authorList>
    </citation>
    <scope>NUCLEOTIDE SEQUENCE [LARGE SCALE GENOMIC DNA]</scope>
    <source>
        <strain>APS</strain>
    </source>
</reference>
<gene>
    <name evidence="1" type="primary">lon</name>
    <name type="ordered locus">BU477</name>
</gene>
<organism>
    <name type="scientific">Buchnera aphidicola subsp. Acyrthosiphon pisum (strain APS)</name>
    <name type="common">Acyrthosiphon pisum symbiotic bacterium</name>
    <dbReference type="NCBI Taxonomy" id="107806"/>
    <lineage>
        <taxon>Bacteria</taxon>
        <taxon>Pseudomonadati</taxon>
        <taxon>Pseudomonadota</taxon>
        <taxon>Gammaproteobacteria</taxon>
        <taxon>Enterobacterales</taxon>
        <taxon>Erwiniaceae</taxon>
        <taxon>Buchnera</taxon>
    </lineage>
</organism>
<name>LON_BUCAI</name>
<feature type="chain" id="PRO_0000076125" description="Lon protease">
    <location>
        <begin position="1"/>
        <end position="777"/>
    </location>
</feature>
<feature type="domain" description="Lon N-terminal" evidence="3">
    <location>
        <begin position="11"/>
        <end position="204"/>
    </location>
</feature>
<feature type="domain" description="Lon proteolytic" evidence="2">
    <location>
        <begin position="592"/>
        <end position="773"/>
    </location>
</feature>
<feature type="active site" evidence="1">
    <location>
        <position position="679"/>
    </location>
</feature>
<feature type="active site" evidence="1">
    <location>
        <position position="722"/>
    </location>
</feature>
<feature type="binding site" evidence="1">
    <location>
        <begin position="356"/>
        <end position="363"/>
    </location>
    <ligand>
        <name>ATP</name>
        <dbReference type="ChEBI" id="CHEBI:30616"/>
    </ligand>
</feature>
<sequence length="777" mass="88033">MNSERSERITIPVLPLRDVVIYPHMVIPLFVGRQKSIKCIETSMSNDKKIMLIAQKEASKDEPTPKDLFDIGTISAILQMLKLPDGTVKVLIEGLQRAHIKNLTNNGEHFIAEVELISSSNLLDKNQEVLIRTTMNQFESYIKLNKKIPLEILNVLNNIKNSEKLADTIAAHMPLKLNDKQSVLEIRNINDRLEFLMAIMESEIDLLQVEKRIRHRVKKQMEKSQREYYLNEQIKAIQKELGDMDEIPDENKILKRKIKSSKMPKEAREKTELELQKLKMMSPMSAEATVVRSYIDWMIQVPWYLKTKIKKDLQQAKKILDIDHFGLETVKDRILEYLAVQSRKNKIKGPILCLIGPPGVGKTSLGKSIARSTGRKYVRIALGGIRDEAEIRGHRRTYIGSMPGKLIQKMAKAKVKNPLFLLDEIDKMSRDIRVDPASALLEVLDSEQNMNFNDHYLEVDYDLSDVMFVATSNSMNIPAPLLDRMEIIRLSGYTEDEKLNIAKRYLYPKQIERNGLEENEIKITDSAIISIIHYYTREAGVRSLEREISKICRKAVKNLILDKSLKHIEINSKNLKKFLGIKRFDYGKIHGTNQIGQVIGLAWTEVGGELLTIETTCVSGKGKLTYTGSLGEVMQESIQAALTVVRSQADRLGIKKDFHEKHDIHVHVPEGATPKDGPSAGAAMCTAIVSSLTNNPVKSNVAMTGEITLHGKILPIGGLKEKLLAAHRGGIKTVLIPYENKRNLEEIPKNIIEGLNIHPIKKIEEVLKLSLEKIPYV</sequence>
<comment type="function">
    <text evidence="1">ATP-dependent serine protease that mediates the selective degradation of mutant and abnormal proteins as well as certain short-lived regulatory proteins. Required for cellular homeostasis and for survival from DNA damage and developmental changes induced by stress. Degrades polypeptides processively to yield small peptide fragments that are 5 to 10 amino acids long. Binds to DNA in a double-stranded, site-specific manner.</text>
</comment>
<comment type="catalytic activity">
    <reaction evidence="1">
        <text>Hydrolysis of proteins in presence of ATP.</text>
        <dbReference type="EC" id="3.4.21.53"/>
    </reaction>
</comment>
<comment type="subunit">
    <text evidence="1">Homohexamer. Organized in a ring with a central cavity.</text>
</comment>
<comment type="subcellular location">
    <subcellularLocation>
        <location evidence="1">Cytoplasm</location>
    </subcellularLocation>
</comment>
<comment type="induction">
    <text evidence="1">By heat shock.</text>
</comment>
<comment type="similarity">
    <text evidence="1">Belongs to the peptidase S16 family.</text>
</comment>
<protein>
    <recommendedName>
        <fullName evidence="1">Lon protease</fullName>
        <ecNumber evidence="1">3.4.21.53</ecNumber>
    </recommendedName>
    <alternativeName>
        <fullName evidence="1">ATP-dependent protease La</fullName>
    </alternativeName>
</protein>
<dbReference type="EC" id="3.4.21.53" evidence="1"/>
<dbReference type="EMBL" id="BA000003">
    <property type="protein sequence ID" value="BAB13174.1"/>
    <property type="molecule type" value="Genomic_DNA"/>
</dbReference>
<dbReference type="RefSeq" id="NP_240288.1">
    <property type="nucleotide sequence ID" value="NC_002528.1"/>
</dbReference>
<dbReference type="RefSeq" id="WP_010896136.1">
    <property type="nucleotide sequence ID" value="NC_002528.1"/>
</dbReference>
<dbReference type="SMR" id="P57549"/>
<dbReference type="STRING" id="563178.BUAP5A_470"/>
<dbReference type="MEROPS" id="S16.001"/>
<dbReference type="EnsemblBacteria" id="BAB13174">
    <property type="protein sequence ID" value="BAB13174"/>
    <property type="gene ID" value="BAB13174"/>
</dbReference>
<dbReference type="KEGG" id="buc:BU477"/>
<dbReference type="PATRIC" id="fig|107806.10.peg.486"/>
<dbReference type="eggNOG" id="COG0466">
    <property type="taxonomic scope" value="Bacteria"/>
</dbReference>
<dbReference type="HOGENOM" id="CLU_004109_4_3_6"/>
<dbReference type="Proteomes" id="UP000001806">
    <property type="component" value="Chromosome"/>
</dbReference>
<dbReference type="GO" id="GO:0005737">
    <property type="term" value="C:cytoplasm"/>
    <property type="evidence" value="ECO:0007669"/>
    <property type="project" value="UniProtKB-SubCell"/>
</dbReference>
<dbReference type="GO" id="GO:0005524">
    <property type="term" value="F:ATP binding"/>
    <property type="evidence" value="ECO:0007669"/>
    <property type="project" value="UniProtKB-UniRule"/>
</dbReference>
<dbReference type="GO" id="GO:0016887">
    <property type="term" value="F:ATP hydrolysis activity"/>
    <property type="evidence" value="ECO:0007669"/>
    <property type="project" value="UniProtKB-UniRule"/>
</dbReference>
<dbReference type="GO" id="GO:0004176">
    <property type="term" value="F:ATP-dependent peptidase activity"/>
    <property type="evidence" value="ECO:0007669"/>
    <property type="project" value="UniProtKB-UniRule"/>
</dbReference>
<dbReference type="GO" id="GO:0043565">
    <property type="term" value="F:sequence-specific DNA binding"/>
    <property type="evidence" value="ECO:0007669"/>
    <property type="project" value="UniProtKB-UniRule"/>
</dbReference>
<dbReference type="GO" id="GO:0004252">
    <property type="term" value="F:serine-type endopeptidase activity"/>
    <property type="evidence" value="ECO:0007669"/>
    <property type="project" value="UniProtKB-UniRule"/>
</dbReference>
<dbReference type="GO" id="GO:0034605">
    <property type="term" value="P:cellular response to heat"/>
    <property type="evidence" value="ECO:0007669"/>
    <property type="project" value="UniProtKB-UniRule"/>
</dbReference>
<dbReference type="GO" id="GO:0006515">
    <property type="term" value="P:protein quality control for misfolded or incompletely synthesized proteins"/>
    <property type="evidence" value="ECO:0007669"/>
    <property type="project" value="UniProtKB-UniRule"/>
</dbReference>
<dbReference type="CDD" id="cd19500">
    <property type="entry name" value="RecA-like_Lon"/>
    <property type="match status" value="1"/>
</dbReference>
<dbReference type="FunFam" id="1.10.8.60:FF:000035">
    <property type="entry name" value="Lon protease"/>
    <property type="match status" value="1"/>
</dbReference>
<dbReference type="FunFam" id="1.20.58.1480:FF:000001">
    <property type="entry name" value="Lon protease"/>
    <property type="match status" value="1"/>
</dbReference>
<dbReference type="FunFam" id="2.30.130.40:FF:000001">
    <property type="entry name" value="Lon protease"/>
    <property type="match status" value="1"/>
</dbReference>
<dbReference type="FunFam" id="3.30.230.10:FF:000010">
    <property type="entry name" value="Lon protease"/>
    <property type="match status" value="1"/>
</dbReference>
<dbReference type="FunFam" id="1.20.5.5270:FF:000002">
    <property type="entry name" value="Lon protease homolog"/>
    <property type="match status" value="1"/>
</dbReference>
<dbReference type="FunFam" id="3.40.50.300:FF:000021">
    <property type="entry name" value="Lon protease homolog"/>
    <property type="match status" value="1"/>
</dbReference>
<dbReference type="Gene3D" id="1.10.8.60">
    <property type="match status" value="1"/>
</dbReference>
<dbReference type="Gene3D" id="1.20.5.5270">
    <property type="match status" value="1"/>
</dbReference>
<dbReference type="Gene3D" id="1.20.58.1480">
    <property type="match status" value="1"/>
</dbReference>
<dbReference type="Gene3D" id="3.30.230.10">
    <property type="match status" value="1"/>
</dbReference>
<dbReference type="Gene3D" id="2.30.130.40">
    <property type="entry name" value="LON domain-like"/>
    <property type="match status" value="1"/>
</dbReference>
<dbReference type="Gene3D" id="3.40.50.300">
    <property type="entry name" value="P-loop containing nucleotide triphosphate hydrolases"/>
    <property type="match status" value="1"/>
</dbReference>
<dbReference type="HAMAP" id="MF_01973">
    <property type="entry name" value="lon_bact"/>
    <property type="match status" value="1"/>
</dbReference>
<dbReference type="InterPro" id="IPR003593">
    <property type="entry name" value="AAA+_ATPase"/>
</dbReference>
<dbReference type="InterPro" id="IPR003959">
    <property type="entry name" value="ATPase_AAA_core"/>
</dbReference>
<dbReference type="InterPro" id="IPR027543">
    <property type="entry name" value="Lon_bac"/>
</dbReference>
<dbReference type="InterPro" id="IPR004815">
    <property type="entry name" value="Lon_bac/euk-typ"/>
</dbReference>
<dbReference type="InterPro" id="IPR054594">
    <property type="entry name" value="Lon_lid"/>
</dbReference>
<dbReference type="InterPro" id="IPR008269">
    <property type="entry name" value="Lon_proteolytic"/>
</dbReference>
<dbReference type="InterPro" id="IPR027065">
    <property type="entry name" value="Lon_Prtase"/>
</dbReference>
<dbReference type="InterPro" id="IPR003111">
    <property type="entry name" value="Lon_prtase_N"/>
</dbReference>
<dbReference type="InterPro" id="IPR046336">
    <property type="entry name" value="Lon_prtase_N_sf"/>
</dbReference>
<dbReference type="InterPro" id="IPR027417">
    <property type="entry name" value="P-loop_NTPase"/>
</dbReference>
<dbReference type="InterPro" id="IPR008268">
    <property type="entry name" value="Peptidase_S16_AS"/>
</dbReference>
<dbReference type="InterPro" id="IPR015947">
    <property type="entry name" value="PUA-like_sf"/>
</dbReference>
<dbReference type="InterPro" id="IPR020568">
    <property type="entry name" value="Ribosomal_Su5_D2-typ_SF"/>
</dbReference>
<dbReference type="InterPro" id="IPR014721">
    <property type="entry name" value="Ribsml_uS5_D2-typ_fold_subgr"/>
</dbReference>
<dbReference type="NCBIfam" id="TIGR00763">
    <property type="entry name" value="lon"/>
    <property type="match status" value="1"/>
</dbReference>
<dbReference type="NCBIfam" id="NF008053">
    <property type="entry name" value="PRK10787.1"/>
    <property type="match status" value="1"/>
</dbReference>
<dbReference type="PANTHER" id="PTHR10046">
    <property type="entry name" value="ATP DEPENDENT LON PROTEASE FAMILY MEMBER"/>
    <property type="match status" value="1"/>
</dbReference>
<dbReference type="Pfam" id="PF00004">
    <property type="entry name" value="AAA"/>
    <property type="match status" value="1"/>
</dbReference>
<dbReference type="Pfam" id="PF05362">
    <property type="entry name" value="Lon_C"/>
    <property type="match status" value="1"/>
</dbReference>
<dbReference type="Pfam" id="PF22667">
    <property type="entry name" value="Lon_lid"/>
    <property type="match status" value="1"/>
</dbReference>
<dbReference type="Pfam" id="PF02190">
    <property type="entry name" value="LON_substr_bdg"/>
    <property type="match status" value="1"/>
</dbReference>
<dbReference type="PIRSF" id="PIRSF001174">
    <property type="entry name" value="Lon_proteas"/>
    <property type="match status" value="1"/>
</dbReference>
<dbReference type="PRINTS" id="PR00830">
    <property type="entry name" value="ENDOLAPTASE"/>
</dbReference>
<dbReference type="SMART" id="SM00382">
    <property type="entry name" value="AAA"/>
    <property type="match status" value="1"/>
</dbReference>
<dbReference type="SMART" id="SM00464">
    <property type="entry name" value="LON"/>
    <property type="match status" value="1"/>
</dbReference>
<dbReference type="SUPFAM" id="SSF52540">
    <property type="entry name" value="P-loop containing nucleoside triphosphate hydrolases"/>
    <property type="match status" value="1"/>
</dbReference>
<dbReference type="SUPFAM" id="SSF88697">
    <property type="entry name" value="PUA domain-like"/>
    <property type="match status" value="1"/>
</dbReference>
<dbReference type="SUPFAM" id="SSF54211">
    <property type="entry name" value="Ribosomal protein S5 domain 2-like"/>
    <property type="match status" value="1"/>
</dbReference>
<dbReference type="PROSITE" id="PS51787">
    <property type="entry name" value="LON_N"/>
    <property type="match status" value="1"/>
</dbReference>
<dbReference type="PROSITE" id="PS51786">
    <property type="entry name" value="LON_PROTEOLYTIC"/>
    <property type="match status" value="1"/>
</dbReference>
<dbReference type="PROSITE" id="PS01046">
    <property type="entry name" value="LON_SER"/>
    <property type="match status" value="1"/>
</dbReference>
<evidence type="ECO:0000255" key="1">
    <source>
        <dbReference type="HAMAP-Rule" id="MF_01973"/>
    </source>
</evidence>
<evidence type="ECO:0000255" key="2">
    <source>
        <dbReference type="PROSITE-ProRule" id="PRU01122"/>
    </source>
</evidence>
<evidence type="ECO:0000255" key="3">
    <source>
        <dbReference type="PROSITE-ProRule" id="PRU01123"/>
    </source>
</evidence>